<organism>
    <name type="scientific">Oleidesulfovibrio alaskensis (strain ATCC BAA-1058 / DSM 17464 / G20)</name>
    <name type="common">Desulfovibrio alaskensis</name>
    <dbReference type="NCBI Taxonomy" id="207559"/>
    <lineage>
        <taxon>Bacteria</taxon>
        <taxon>Pseudomonadati</taxon>
        <taxon>Thermodesulfobacteriota</taxon>
        <taxon>Desulfovibrionia</taxon>
        <taxon>Desulfovibrionales</taxon>
        <taxon>Desulfovibrionaceae</taxon>
        <taxon>Oleidesulfovibrio</taxon>
    </lineage>
</organism>
<gene>
    <name evidence="1" type="primary">ahcY</name>
    <name type="ordered locus">Dde_3134</name>
</gene>
<feature type="chain" id="PRO_1000024724" description="Adenosylhomocysteinase">
    <location>
        <begin position="1"/>
        <end position="479"/>
    </location>
</feature>
<feature type="binding site" evidence="1">
    <location>
        <position position="66"/>
    </location>
    <ligand>
        <name>substrate</name>
    </ligand>
</feature>
<feature type="binding site" evidence="1">
    <location>
        <position position="142"/>
    </location>
    <ligand>
        <name>substrate</name>
    </ligand>
</feature>
<feature type="binding site" evidence="1">
    <location>
        <position position="203"/>
    </location>
    <ligand>
        <name>substrate</name>
    </ligand>
</feature>
<feature type="binding site" evidence="1">
    <location>
        <begin position="204"/>
        <end position="206"/>
    </location>
    <ligand>
        <name>NAD(+)</name>
        <dbReference type="ChEBI" id="CHEBI:57540"/>
    </ligand>
</feature>
<feature type="binding site" evidence="1">
    <location>
        <position position="233"/>
    </location>
    <ligand>
        <name>substrate</name>
    </ligand>
</feature>
<feature type="binding site" evidence="1">
    <location>
        <position position="237"/>
    </location>
    <ligand>
        <name>substrate</name>
    </ligand>
</feature>
<feature type="binding site" evidence="1">
    <location>
        <position position="238"/>
    </location>
    <ligand>
        <name>NAD(+)</name>
        <dbReference type="ChEBI" id="CHEBI:57540"/>
    </ligand>
</feature>
<feature type="binding site" evidence="1">
    <location>
        <begin position="267"/>
        <end position="272"/>
    </location>
    <ligand>
        <name>NAD(+)</name>
        <dbReference type="ChEBI" id="CHEBI:57540"/>
    </ligand>
</feature>
<feature type="binding site" evidence="1">
    <location>
        <position position="290"/>
    </location>
    <ligand>
        <name>NAD(+)</name>
        <dbReference type="ChEBI" id="CHEBI:57540"/>
    </ligand>
</feature>
<feature type="binding site" evidence="1">
    <location>
        <position position="325"/>
    </location>
    <ligand>
        <name>NAD(+)</name>
        <dbReference type="ChEBI" id="CHEBI:57540"/>
    </ligand>
</feature>
<feature type="binding site" evidence="1">
    <location>
        <begin position="346"/>
        <end position="348"/>
    </location>
    <ligand>
        <name>NAD(+)</name>
        <dbReference type="ChEBI" id="CHEBI:57540"/>
    </ligand>
</feature>
<feature type="binding site" evidence="1">
    <location>
        <position position="394"/>
    </location>
    <ligand>
        <name>NAD(+)</name>
        <dbReference type="ChEBI" id="CHEBI:57540"/>
    </ligand>
</feature>
<dbReference type="EC" id="3.13.2.1" evidence="1"/>
<dbReference type="EMBL" id="CP000112">
    <property type="protein sequence ID" value="ABB39928.1"/>
    <property type="molecule type" value="Genomic_DNA"/>
</dbReference>
<dbReference type="RefSeq" id="WP_011368885.1">
    <property type="nucleotide sequence ID" value="NC_007519.1"/>
</dbReference>
<dbReference type="SMR" id="Q30WL8"/>
<dbReference type="STRING" id="207559.Dde_3134"/>
<dbReference type="KEGG" id="dde:Dde_3134"/>
<dbReference type="eggNOG" id="COG0499">
    <property type="taxonomic scope" value="Bacteria"/>
</dbReference>
<dbReference type="HOGENOM" id="CLU_025194_2_0_7"/>
<dbReference type="UniPathway" id="UPA00314">
    <property type="reaction ID" value="UER00076"/>
</dbReference>
<dbReference type="Proteomes" id="UP000002710">
    <property type="component" value="Chromosome"/>
</dbReference>
<dbReference type="GO" id="GO:0005829">
    <property type="term" value="C:cytosol"/>
    <property type="evidence" value="ECO:0007669"/>
    <property type="project" value="TreeGrafter"/>
</dbReference>
<dbReference type="GO" id="GO:0004013">
    <property type="term" value="F:adenosylhomocysteinase activity"/>
    <property type="evidence" value="ECO:0007669"/>
    <property type="project" value="UniProtKB-UniRule"/>
</dbReference>
<dbReference type="GO" id="GO:0071269">
    <property type="term" value="P:L-homocysteine biosynthetic process"/>
    <property type="evidence" value="ECO:0007669"/>
    <property type="project" value="UniProtKB-UniRule"/>
</dbReference>
<dbReference type="GO" id="GO:0006730">
    <property type="term" value="P:one-carbon metabolic process"/>
    <property type="evidence" value="ECO:0007669"/>
    <property type="project" value="UniProtKB-KW"/>
</dbReference>
<dbReference type="GO" id="GO:0033353">
    <property type="term" value="P:S-adenosylmethionine cycle"/>
    <property type="evidence" value="ECO:0007669"/>
    <property type="project" value="TreeGrafter"/>
</dbReference>
<dbReference type="CDD" id="cd00401">
    <property type="entry name" value="SAHH"/>
    <property type="match status" value="1"/>
</dbReference>
<dbReference type="FunFam" id="3.40.50.720:FF:000004">
    <property type="entry name" value="Adenosylhomocysteinase"/>
    <property type="match status" value="1"/>
</dbReference>
<dbReference type="Gene3D" id="3.40.50.1480">
    <property type="entry name" value="Adenosylhomocysteinase-like"/>
    <property type="match status" value="1"/>
</dbReference>
<dbReference type="Gene3D" id="3.40.50.720">
    <property type="entry name" value="NAD(P)-binding Rossmann-like Domain"/>
    <property type="match status" value="1"/>
</dbReference>
<dbReference type="HAMAP" id="MF_00563">
    <property type="entry name" value="AdoHcyase"/>
    <property type="match status" value="1"/>
</dbReference>
<dbReference type="InterPro" id="IPR042172">
    <property type="entry name" value="Adenosylhomocyst_ase-like_sf"/>
</dbReference>
<dbReference type="InterPro" id="IPR000043">
    <property type="entry name" value="Adenosylhomocysteinase-like"/>
</dbReference>
<dbReference type="InterPro" id="IPR015878">
    <property type="entry name" value="Ado_hCys_hydrolase_NAD-bd"/>
</dbReference>
<dbReference type="InterPro" id="IPR036291">
    <property type="entry name" value="NAD(P)-bd_dom_sf"/>
</dbReference>
<dbReference type="InterPro" id="IPR020082">
    <property type="entry name" value="S-Ado-L-homoCys_hydrolase_CS"/>
</dbReference>
<dbReference type="NCBIfam" id="TIGR00936">
    <property type="entry name" value="ahcY"/>
    <property type="match status" value="1"/>
</dbReference>
<dbReference type="NCBIfam" id="NF004005">
    <property type="entry name" value="PRK05476.2-3"/>
    <property type="match status" value="1"/>
</dbReference>
<dbReference type="PANTHER" id="PTHR23420">
    <property type="entry name" value="ADENOSYLHOMOCYSTEINASE"/>
    <property type="match status" value="1"/>
</dbReference>
<dbReference type="PANTHER" id="PTHR23420:SF0">
    <property type="entry name" value="ADENOSYLHOMOCYSTEINASE"/>
    <property type="match status" value="1"/>
</dbReference>
<dbReference type="Pfam" id="PF05221">
    <property type="entry name" value="AdoHcyase"/>
    <property type="match status" value="1"/>
</dbReference>
<dbReference type="Pfam" id="PF00670">
    <property type="entry name" value="AdoHcyase_NAD"/>
    <property type="match status" value="1"/>
</dbReference>
<dbReference type="PIRSF" id="PIRSF001109">
    <property type="entry name" value="Ad_hcy_hydrolase"/>
    <property type="match status" value="1"/>
</dbReference>
<dbReference type="SMART" id="SM00996">
    <property type="entry name" value="AdoHcyase"/>
    <property type="match status" value="1"/>
</dbReference>
<dbReference type="SMART" id="SM00997">
    <property type="entry name" value="AdoHcyase_NAD"/>
    <property type="match status" value="1"/>
</dbReference>
<dbReference type="SUPFAM" id="SSF52283">
    <property type="entry name" value="Formate/glycerate dehydrogenase catalytic domain-like"/>
    <property type="match status" value="1"/>
</dbReference>
<dbReference type="SUPFAM" id="SSF51735">
    <property type="entry name" value="NAD(P)-binding Rossmann-fold domains"/>
    <property type="match status" value="1"/>
</dbReference>
<dbReference type="PROSITE" id="PS00738">
    <property type="entry name" value="ADOHCYASE_1"/>
    <property type="match status" value="1"/>
</dbReference>
<dbReference type="PROSITE" id="PS00739">
    <property type="entry name" value="ADOHCYASE_2"/>
    <property type="match status" value="1"/>
</dbReference>
<evidence type="ECO:0000255" key="1">
    <source>
        <dbReference type="HAMAP-Rule" id="MF_00563"/>
    </source>
</evidence>
<keyword id="KW-0963">Cytoplasm</keyword>
<keyword id="KW-0378">Hydrolase</keyword>
<keyword id="KW-0520">NAD</keyword>
<keyword id="KW-0554">One-carbon metabolism</keyword>
<keyword id="KW-1185">Reference proteome</keyword>
<comment type="function">
    <text evidence="1">May play a key role in the regulation of the intracellular concentration of adenosylhomocysteine.</text>
</comment>
<comment type="catalytic activity">
    <reaction evidence="1">
        <text>S-adenosyl-L-homocysteine + H2O = L-homocysteine + adenosine</text>
        <dbReference type="Rhea" id="RHEA:21708"/>
        <dbReference type="ChEBI" id="CHEBI:15377"/>
        <dbReference type="ChEBI" id="CHEBI:16335"/>
        <dbReference type="ChEBI" id="CHEBI:57856"/>
        <dbReference type="ChEBI" id="CHEBI:58199"/>
        <dbReference type="EC" id="3.13.2.1"/>
    </reaction>
</comment>
<comment type="cofactor">
    <cofactor evidence="1">
        <name>NAD(+)</name>
        <dbReference type="ChEBI" id="CHEBI:57540"/>
    </cofactor>
    <text evidence="1">Binds 1 NAD(+) per subunit.</text>
</comment>
<comment type="pathway">
    <text evidence="1">Amino-acid biosynthesis; L-homocysteine biosynthesis; L-homocysteine from S-adenosyl-L-homocysteine: step 1/1.</text>
</comment>
<comment type="subcellular location">
    <subcellularLocation>
        <location evidence="1">Cytoplasm</location>
    </subcellularLocation>
</comment>
<comment type="similarity">
    <text evidence="1">Belongs to the adenosylhomocysteinase family.</text>
</comment>
<protein>
    <recommendedName>
        <fullName evidence="1">Adenosylhomocysteinase</fullName>
        <ecNumber evidence="1">3.13.2.1</ecNumber>
    </recommendedName>
    <alternativeName>
        <fullName evidence="1">S-adenosyl-L-homocysteine hydrolase</fullName>
        <shortName evidence="1">AdoHcyase</shortName>
    </alternativeName>
</protein>
<reference key="1">
    <citation type="journal article" date="2011" name="J. Bacteriol.">
        <title>Complete genome sequence and updated annotation of Desulfovibrio alaskensis G20.</title>
        <authorList>
            <person name="Hauser L.J."/>
            <person name="Land M.L."/>
            <person name="Brown S.D."/>
            <person name="Larimer F."/>
            <person name="Keller K.L."/>
            <person name="Rapp-Giles B.J."/>
            <person name="Price M.N."/>
            <person name="Lin M."/>
            <person name="Bruce D.C."/>
            <person name="Detter J.C."/>
            <person name="Tapia R."/>
            <person name="Han C.S."/>
            <person name="Goodwin L.A."/>
            <person name="Cheng J.F."/>
            <person name="Pitluck S."/>
            <person name="Copeland A."/>
            <person name="Lucas S."/>
            <person name="Nolan M."/>
            <person name="Lapidus A.L."/>
            <person name="Palumbo A.V."/>
            <person name="Wall J.D."/>
        </authorList>
    </citation>
    <scope>NUCLEOTIDE SEQUENCE [LARGE SCALE GENOMIC DNA]</scope>
    <source>
        <strain>ATCC BAA-1058 / DSM 17464 / G20</strain>
    </source>
</reference>
<sequence length="479" mass="52811">MTDARKALPLDLSLENKVKDLSQADFGYKEMQLSEREMPGLMELIAKHGAEKPLKGLKVTGSLHMTIQTAMLIKTLYELGADIRWASCNIFSTQDHAAAAIADSGMAKVFAWKGETLEEYWWCTEMALTWPDGSGPDLIVDDGGDATMLIHKGVEAEKNPALLEKSYDNKEFQIVMNRIALSMKNDPGKWTRVAAKVRGVSEETTTGVHRLYHMEKDGSLLFPAINVNDSVTKSKFDNLYGCRESLADGIKRATDVMIAGKTVVVLGYGDVGKGCAHSMRGFGARVLVTEIDPICALQAAMEGFEVVTMDEAAPEGDIFVTATGNFKVITGEHMERMKDEAIVCNIGHFDNEIDMAYLEDSTECSCLNIKPQVDKWTLKSGRSIIVLAEGRLVNLGCATGHPSFVMSNSFTNQVLAQLELASNPDLERKVYILPKKLDEEVARLHLARLGAKLTTLTDEQAEYIGVDKTGPFKPDHYRY</sequence>
<proteinExistence type="inferred from homology"/>
<name>SAHH_OLEA2</name>
<accession>Q30WL8</accession>